<proteinExistence type="evidence at protein level"/>
<evidence type="ECO:0000250" key="1"/>
<evidence type="ECO:0000255" key="2"/>
<evidence type="ECO:0000269" key="3">
    <source>
    </source>
</evidence>
<evidence type="ECO:0000269" key="4">
    <source>
    </source>
</evidence>
<evidence type="ECO:0000305" key="5"/>
<evidence type="ECO:0000305" key="6">
    <source>
    </source>
</evidence>
<organism>
    <name type="scientific">Cyriopagopus schmidti</name>
    <name type="common">Chinese bird spider</name>
    <name type="synonym">Haplopelma schmidti</name>
    <dbReference type="NCBI Taxonomy" id="29017"/>
    <lineage>
        <taxon>Eukaryota</taxon>
        <taxon>Metazoa</taxon>
        <taxon>Ecdysozoa</taxon>
        <taxon>Arthropoda</taxon>
        <taxon>Chelicerata</taxon>
        <taxon>Arachnida</taxon>
        <taxon>Araneae</taxon>
        <taxon>Mygalomorphae</taxon>
        <taxon>Theraphosidae</taxon>
        <taxon>Cyriopagopus</taxon>
    </lineage>
</organism>
<dbReference type="SMR" id="P61104"/>
<dbReference type="TCDB" id="8.B.5.3.4">
    <property type="family name" value="the na(+)/k(+)/ca(2+) channel targeting tarantula huwentoxin (tht) family"/>
</dbReference>
<dbReference type="ArachnoServer" id="AS000333">
    <property type="toxin name" value="omega-theraphotoxin-Hs2a"/>
</dbReference>
<dbReference type="GO" id="GO:0005576">
    <property type="term" value="C:extracellular region"/>
    <property type="evidence" value="ECO:0007669"/>
    <property type="project" value="UniProtKB-SubCell"/>
</dbReference>
<dbReference type="GO" id="GO:0005246">
    <property type="term" value="F:calcium channel regulator activity"/>
    <property type="evidence" value="ECO:0007669"/>
    <property type="project" value="UniProtKB-KW"/>
</dbReference>
<dbReference type="GO" id="GO:0008200">
    <property type="term" value="F:ion channel inhibitor activity"/>
    <property type="evidence" value="ECO:0007669"/>
    <property type="project" value="InterPro"/>
</dbReference>
<dbReference type="GO" id="GO:0090729">
    <property type="term" value="F:toxin activity"/>
    <property type="evidence" value="ECO:0007669"/>
    <property type="project" value="UniProtKB-KW"/>
</dbReference>
<dbReference type="InterPro" id="IPR011696">
    <property type="entry name" value="Huwentoxin-1"/>
</dbReference>
<dbReference type="InterPro" id="IPR013140">
    <property type="entry name" value="Huwentoxin_CS1"/>
</dbReference>
<dbReference type="Pfam" id="PF07740">
    <property type="entry name" value="Toxin_12"/>
    <property type="match status" value="1"/>
</dbReference>
<dbReference type="SUPFAM" id="SSF57059">
    <property type="entry name" value="omega toxin-like"/>
    <property type="match status" value="1"/>
</dbReference>
<dbReference type="PROSITE" id="PS60021">
    <property type="entry name" value="HWTX_1"/>
    <property type="match status" value="1"/>
</dbReference>
<name>TXH5_CYRSC</name>
<accession>P61104</accession>
<reference key="1">
    <citation type="journal article" date="2003" name="Toxicon">
        <title>cDNA sequence analysis of seven peptide toxins from the spider Selenocosmia huwena.</title>
        <authorList>
            <person name="Diao J."/>
            <person name="Lin Y."/>
            <person name="Tang J."/>
            <person name="Liang S.-P."/>
        </authorList>
    </citation>
    <scope>NUCLEOTIDE SEQUENCE [MRNA]</scope>
    <source>
        <tissue>Venom gland</tissue>
    </source>
</reference>
<reference key="2">
    <citation type="journal article" date="2003" name="Toxicon">
        <title>Huwentoxin-V, a novel insecticidal peptide toxin from the spider Selenocosmia huwena, and a natural mutant of the toxin: indicates the key amino acid residues related to the biological activity.</title>
        <authorList>
            <person name="Zhang P.-F."/>
            <person name="Chen P."/>
            <person name="Hu W.-J."/>
            <person name="Liang S.-P."/>
        </authorList>
    </citation>
    <scope>PROTEIN SEQUENCE OF 51-85</scope>
    <scope>DISULFIDE BONDS</scope>
    <scope>TOXIC DOSE</scope>
    <scope>MASS SPECTROMETRY</scope>
    <scope>DISRUPTION PHENOTYPE</scope>
    <source>
        <tissue>Venom</tissue>
    </source>
</reference>
<reference key="3">
    <citation type="journal article" date="2008" name="Eur. J. Pharmacol.">
        <title>Inhibition of insect calcium channels by huwentoxin-V, a neurotoxin from Chinese tarantula Ornithoctonus huwena venom.</title>
        <authorList>
            <person name="Deng M."/>
            <person name="Luo X."/>
            <person name="Meng E."/>
            <person name="Xiao Y."/>
            <person name="Liang S."/>
        </authorList>
    </citation>
    <scope>FUNCTION</scope>
</reference>
<protein>
    <recommendedName>
        <fullName>Omega-theraphotoxin-Hs2a</fullName>
        <shortName>Omega-TRTX-Hs2a</shortName>
    </recommendedName>
    <alternativeName>
        <fullName>Huwentoxin-5</fullName>
    </alternativeName>
    <alternativeName>
        <fullName>Huwentoxin-V</fullName>
        <shortName>HwTx-V</shortName>
    </alternativeName>
    <component>
        <recommendedName>
            <fullName>Omega-theraphotoxin-Hs2b</fullName>
            <shortName>Omega-TRTX-Hs2b</shortName>
        </recommendedName>
        <alternativeName>
            <fullName>Mutant of huwentoxin-5</fullName>
        </alternativeName>
        <alternativeName>
            <fullName>Mutant of huwentoxin-V</fullName>
            <shortName>mHWTX-V</shortName>
        </alternativeName>
    </component>
</protein>
<sequence length="86" mass="9659">MKSIVFVALFGLALLAVVCSASEDAHKELLKEVVRAMVVDKTDAVQAEERECRWYLGGCSQDGDCCKHLQCHSNYEWCVWDGTFSK</sequence>
<comment type="function">
    <text evidence="4">Omega-theraphotoxin-Hs2a blocks voltage-gated calcium channels (Cav) in adult cockroach DUM neurons. Reversibly paralyzes locusts and cockroaches, and causes death at high doses,.</text>
</comment>
<comment type="subcellular location">
    <subcellularLocation>
        <location>Secreted</location>
    </subcellularLocation>
</comment>
<comment type="tissue specificity">
    <text>Expressed by the venom gland.</text>
</comment>
<comment type="domain">
    <text evidence="1">The presence of a 'disulfide through disulfide knot' structurally defines this protein as a knottin.</text>
</comment>
<comment type="mass spectrometry" mass="4111.4" error="0.4" method="MALDI" evidence="3">
    <molecule>Omega-theraphotoxin-Hs2a</molecule>
</comment>
<comment type="mass spectrometry" mass="3877.1" error="0.4" method="MALDI" evidence="3">
    <molecule>Omega-theraphotoxin-Hs2b</molecule>
</comment>
<comment type="disruption phenotype">
    <text evidence="3">Its natural mutant mHwTx-V shows no effect on locusts, cockroaches, and mice.</text>
</comment>
<comment type="toxic dose">
    <text evidence="3">PD(50) of HwTx-V is 16 +/- 5 mg/kg to locusts.</text>
</comment>
<comment type="miscellaneous">
    <text evidence="6">Negative results: has no effect on voltage-gated sodium or potassium channels in DUM neurons. Has no effect on mice by intraabdominal or intracerebroventricular injection (PubMed:18234186).</text>
</comment>
<comment type="similarity">
    <text evidence="5">Belongs to the neurotoxin 10 (Hwtx-1) family. 17 (Hntx-9) subfamily.</text>
</comment>
<keyword id="KW-0108">Calcium channel impairing toxin</keyword>
<keyword id="KW-0903">Direct protein sequencing</keyword>
<keyword id="KW-1015">Disulfide bond</keyword>
<keyword id="KW-0872">Ion channel impairing toxin</keyword>
<keyword id="KW-0960">Knottin</keyword>
<keyword id="KW-0528">Neurotoxin</keyword>
<keyword id="KW-0964">Secreted</keyword>
<keyword id="KW-0732">Signal</keyword>
<keyword id="KW-0800">Toxin</keyword>
<keyword id="KW-1218">Voltage-gated calcium channel impairing toxin</keyword>
<feature type="signal peptide" evidence="2">
    <location>
        <begin position="1"/>
        <end position="20"/>
    </location>
</feature>
<feature type="propeptide" id="PRO_0000035567" evidence="3">
    <location>
        <begin position="21"/>
        <end position="50"/>
    </location>
</feature>
<feature type="chain" id="PRO_0000035568" description="Omega-theraphotoxin-Hs2a">
    <location>
        <begin position="51"/>
        <end position="85"/>
    </location>
</feature>
<feature type="chain" id="PRO_0000035569" description="Omega-theraphotoxin-Hs2b">
    <location>
        <begin position="51"/>
        <end position="83"/>
    </location>
</feature>
<feature type="disulfide bond" evidence="1">
    <location>
        <begin position="52"/>
        <end position="66"/>
    </location>
</feature>
<feature type="disulfide bond" evidence="1">
    <location>
        <begin position="59"/>
        <end position="71"/>
    </location>
</feature>
<feature type="disulfide bond" evidence="1">
    <location>
        <begin position="65"/>
        <end position="78"/>
    </location>
</feature>